<accession>P23913</accession>
<evidence type="ECO:0000250" key="1">
    <source>
        <dbReference type="UniProtKB" id="Q14739"/>
    </source>
</evidence>
<evidence type="ECO:0000250" key="2">
    <source>
        <dbReference type="UniProtKB" id="Q3U9G9"/>
    </source>
</evidence>
<evidence type="ECO:0000255" key="3"/>
<evidence type="ECO:0000256" key="4">
    <source>
        <dbReference type="SAM" id="MobiDB-lite"/>
    </source>
</evidence>
<evidence type="ECO:0000269" key="5">
    <source>
    </source>
</evidence>
<evidence type="ECO:0000269" key="6">
    <source>
    </source>
</evidence>
<evidence type="ECO:0000303" key="7">
    <source>
    </source>
</evidence>
<evidence type="ECO:0000305" key="8"/>
<evidence type="ECO:0007829" key="9">
    <source>
        <dbReference type="PDB" id="2L8D"/>
    </source>
</evidence>
<sequence length="637" mass="73498">MPNRKYADGEVVMGRWPGSVLYYEVQVTSYDDASHLYTVKYKDGTELALKESDIRLQSSFKQRKSQSSSSSPSRRSRSRSRSRSPGRPAKGRRRSSSHSREHKEDKKKIIQETSLAPPKPSENNTRRYNGEPDSTERNDTSSKLLEQQKLKPDVEMERVLDQYSLRSRREEKKKEEIYAEKKIFEAIKTPEKPSSKTKELEFGGRFGTFMLMFFLPATVLYLVLMCKQDDPSLMNFPPLPALESLWETKVFGVFLLWFFFQALFYLLPIGKVVEGLPLSNPRKLQYRINGFYAFLLTAAAIGTLLYFQFELHYLYDHFVQFAVSAAAFSMALSIYLYIRSLKAPEEDLAPGGNSGYLVYDFFTGHELNPRIGSFDLKYFCELRPGLIGWVVINLAMLLAEMKIHNQSMPSLSMILVNSFQLLYVVDALWNEEAVLTTMDITHDGFGFMLAFGDLVWVPFVYSLQAFYLVGHPIAISWPVAAAITILNCIGYYIFRSANSQKNNFRRNPADPKLSYLKVIPTATGKGLLVTGWWGFVRHPNYLGDIIMALAWSLPCGFNHILPYFYVIYFICLLVHREARDEHHCKKKYGLAWERYCQRVPYTHISLHLLEHSTYLICKLKYTSHLCTWSVCYLGFKH</sequence>
<comment type="function">
    <text evidence="1 2">Catalyzes the reduction of the C14-unsaturated bond of lanosterol, as part of the metabolic pathway leading to cholesterol biosynthesis (By similarity). Anchors the lamina and the heterochromatin to the inner nuclear membrane (By similarity).</text>
</comment>
<comment type="catalytic activity">
    <reaction evidence="1">
        <text>5alpha-cholest-8,14-dien-3beta-ol + NADPH + H(+) = 5alpha-cholest-8-en-3beta-ol + NADP(+)</text>
        <dbReference type="Rhea" id="RHEA:46456"/>
        <dbReference type="ChEBI" id="CHEBI:15378"/>
        <dbReference type="ChEBI" id="CHEBI:16608"/>
        <dbReference type="ChEBI" id="CHEBI:57783"/>
        <dbReference type="ChEBI" id="CHEBI:58349"/>
        <dbReference type="ChEBI" id="CHEBI:86131"/>
    </reaction>
</comment>
<comment type="catalytic activity">
    <reaction evidence="1">
        <text>4,4-dimethyl-5alpha-cholesta-8,24-dien-3beta-ol + NADP(+) = 4,4-dimethyl-5alpha-cholesta-8,14,24-trien-3beta-ol + NADPH + H(+)</text>
        <dbReference type="Rhea" id="RHEA:18561"/>
        <dbReference type="ChEBI" id="CHEBI:15378"/>
        <dbReference type="ChEBI" id="CHEBI:17813"/>
        <dbReference type="ChEBI" id="CHEBI:18364"/>
        <dbReference type="ChEBI" id="CHEBI:57783"/>
        <dbReference type="ChEBI" id="CHEBI:58349"/>
        <dbReference type="EC" id="1.3.1.70"/>
    </reaction>
</comment>
<comment type="catalytic activity">
    <reaction evidence="1">
        <text>4,4-dimethyl-8,14-cholestadien-3beta-ol + NADPH + H(+) = 4,4-dimethyl-5alpha-cholest-8-en-3beta-ol + NADP(+)</text>
        <dbReference type="Rhea" id="RHEA:46812"/>
        <dbReference type="ChEBI" id="CHEBI:15378"/>
        <dbReference type="ChEBI" id="CHEBI:57783"/>
        <dbReference type="ChEBI" id="CHEBI:58349"/>
        <dbReference type="ChEBI" id="CHEBI:78904"/>
        <dbReference type="ChEBI" id="CHEBI:87044"/>
    </reaction>
</comment>
<comment type="pathway">
    <text>Steroid biosynthesis; cholesterol biosynthesis.</text>
</comment>
<comment type="subunit">
    <text evidence="1">Interacts with DNA (By similarity). Interaction with DNA is sequence independent with higher affinity for supercoiled and relaxed circular DNA than linear DNA (By similarity).</text>
</comment>
<comment type="subcellular location">
    <subcellularLocation>
        <location evidence="5">Nucleus inner membrane</location>
        <topology evidence="3">Multi-pass membrane protein</topology>
    </subcellularLocation>
    <subcellularLocation>
        <location evidence="1">Nucleus</location>
    </subcellularLocation>
    <subcellularLocation>
        <location evidence="1">Cytoplasm</location>
    </subcellularLocation>
    <subcellularLocation>
        <location evidence="1">Endoplasmic reticulum membrane</location>
    </subcellularLocation>
    <text evidence="1">Nucleus; nuclear rim.</text>
</comment>
<comment type="domain">
    <text evidence="6">The Tudor domain may not recognize methylation marks, but rather bind unassembled free histone H3.</text>
</comment>
<comment type="similarity">
    <text evidence="8">Belongs to the ERG4/ERG24 family.</text>
</comment>
<organism>
    <name type="scientific">Gallus gallus</name>
    <name type="common">Chicken</name>
    <dbReference type="NCBI Taxonomy" id="9031"/>
    <lineage>
        <taxon>Eukaryota</taxon>
        <taxon>Metazoa</taxon>
        <taxon>Chordata</taxon>
        <taxon>Craniata</taxon>
        <taxon>Vertebrata</taxon>
        <taxon>Euteleostomi</taxon>
        <taxon>Archelosauria</taxon>
        <taxon>Archosauria</taxon>
        <taxon>Dinosauria</taxon>
        <taxon>Saurischia</taxon>
        <taxon>Theropoda</taxon>
        <taxon>Coelurosauria</taxon>
        <taxon>Aves</taxon>
        <taxon>Neognathae</taxon>
        <taxon>Galloanserae</taxon>
        <taxon>Galliformes</taxon>
        <taxon>Phasianidae</taxon>
        <taxon>Phasianinae</taxon>
        <taxon>Gallus</taxon>
    </lineage>
</organism>
<reference key="1">
    <citation type="journal article" date="1990" name="J. Cell Biol.">
        <title>The lamin B receptor of the nuclear envelope inner membrane: a polytopic protein with eight potential transmembrane domains.</title>
        <authorList>
            <person name="Worman H.J."/>
            <person name="Evans C.D."/>
            <person name="Blobel G."/>
        </authorList>
    </citation>
    <scope>NUCLEOTIDE SEQUENCE [MRNA]</scope>
    <scope>SUBCELLULAR LOCATION</scope>
</reference>
<reference key="2">
    <citation type="journal article" date="2012" name="J. Biol. Chem.">
        <title>Solution structure and molecular interactions of lamin B receptor tudor domain.</title>
        <authorList>
            <person name="Liokatis S."/>
            <person name="Edlich C."/>
            <person name="Soupsana K."/>
            <person name="Giannios I."/>
            <person name="Panagiotidou P."/>
            <person name="Tripsianes K."/>
            <person name="Sattler M."/>
            <person name="Georgatos S.D."/>
            <person name="Politou A.S."/>
        </authorList>
    </citation>
    <scope>STRUCTURE BY NMR OF 1-62</scope>
    <scope>DOMAIN TUDOR</scope>
</reference>
<gene>
    <name type="primary">LBR</name>
</gene>
<name>LBR_CHICK</name>
<feature type="chain" id="PRO_0000207511" description="Delta(14)-sterol reductase LBR">
    <location>
        <begin position="1"/>
        <end position="637"/>
    </location>
</feature>
<feature type="topological domain" description="Nuclear" evidence="3">
    <location>
        <begin position="1"/>
        <end position="205"/>
    </location>
</feature>
<feature type="transmembrane region" description="Helical" evidence="3">
    <location>
        <begin position="206"/>
        <end position="226"/>
    </location>
</feature>
<feature type="transmembrane region" description="Helical" evidence="3">
    <location>
        <begin position="250"/>
        <end position="270"/>
    </location>
</feature>
<feature type="transmembrane region" description="Helical" evidence="3">
    <location>
        <begin position="288"/>
        <end position="309"/>
    </location>
</feature>
<feature type="transmembrane region" description="Helical" evidence="3">
    <location>
        <begin position="317"/>
        <end position="338"/>
    </location>
</feature>
<feature type="transmembrane region" description="Helical" evidence="3">
    <location>
        <begin position="378"/>
        <end position="399"/>
    </location>
</feature>
<feature type="transmembrane region" description="Helical" evidence="3">
    <location>
        <begin position="403"/>
        <end position="425"/>
    </location>
</feature>
<feature type="transmembrane region" description="Helical" evidence="3">
    <location>
        <begin position="466"/>
        <end position="486"/>
    </location>
</feature>
<feature type="transmembrane region" description="Helical" evidence="3">
    <location>
        <begin position="554"/>
        <end position="574"/>
    </location>
</feature>
<feature type="domain" description="Tudor">
    <location>
        <begin position="1"/>
        <end position="62"/>
    </location>
</feature>
<feature type="region of interest" description="Disordered" evidence="4">
    <location>
        <begin position="57"/>
        <end position="151"/>
    </location>
</feature>
<feature type="compositionally biased region" description="Low complexity" evidence="4">
    <location>
        <begin position="57"/>
        <end position="73"/>
    </location>
</feature>
<feature type="compositionally biased region" description="Basic residues" evidence="4">
    <location>
        <begin position="74"/>
        <end position="97"/>
    </location>
</feature>
<feature type="compositionally biased region" description="Basic and acidic residues" evidence="4">
    <location>
        <begin position="98"/>
        <end position="110"/>
    </location>
</feature>
<feature type="compositionally biased region" description="Basic and acidic residues" evidence="4">
    <location>
        <begin position="124"/>
        <end position="151"/>
    </location>
</feature>
<feature type="modified residue" description="Phosphoserine; by PKA" evidence="3">
    <location>
        <position position="95"/>
    </location>
</feature>
<feature type="modified residue" description="Phosphoserine; by PKA" evidence="3">
    <location>
        <position position="96"/>
    </location>
</feature>
<feature type="strand" evidence="9">
    <location>
        <begin position="2"/>
        <end position="6"/>
    </location>
</feature>
<feature type="strand" evidence="9">
    <location>
        <begin position="11"/>
        <end position="15"/>
    </location>
</feature>
<feature type="strand" evidence="9">
    <location>
        <begin position="22"/>
        <end position="31"/>
    </location>
</feature>
<feature type="turn" evidence="9">
    <location>
        <begin position="32"/>
        <end position="35"/>
    </location>
</feature>
<feature type="strand" evidence="9">
    <location>
        <begin position="36"/>
        <end position="41"/>
    </location>
</feature>
<feature type="strand" evidence="9">
    <location>
        <begin position="46"/>
        <end position="50"/>
    </location>
</feature>
<feature type="helix" evidence="9">
    <location>
        <begin position="51"/>
        <end position="53"/>
    </location>
</feature>
<feature type="strand" evidence="9">
    <location>
        <begin position="57"/>
        <end position="59"/>
    </location>
</feature>
<protein>
    <recommendedName>
        <fullName>Delta(14)-sterol reductase LBR</fullName>
        <shortName>Delta-14-SR</shortName>
        <ecNumber evidence="1">1.3.1.70</ecNumber>
    </recommendedName>
    <alternativeName>
        <fullName evidence="1">3-beta-hydroxysterol Delta (14)-reductase</fullName>
    </alternativeName>
    <alternativeName>
        <fullName>C-14 sterol reductase</fullName>
        <shortName>C14SR</shortName>
    </alternativeName>
    <alternativeName>
        <fullName evidence="7">Integral nuclear envelope inner membrane protein</fullName>
    </alternativeName>
    <alternativeName>
        <fullName evidence="7">Lamin-B receptor</fullName>
    </alternativeName>
    <alternativeName>
        <fullName>Sterol C14-reductase</fullName>
    </alternativeName>
</protein>
<dbReference type="EC" id="1.3.1.70" evidence="1"/>
<dbReference type="EMBL" id="Y00822">
    <property type="protein sequence ID" value="CAA68758.1"/>
    <property type="molecule type" value="mRNA"/>
</dbReference>
<dbReference type="PIR" id="A36427">
    <property type="entry name" value="A36427"/>
</dbReference>
<dbReference type="RefSeq" id="NP_990673.1">
    <property type="nucleotide sequence ID" value="NM_205342.1"/>
</dbReference>
<dbReference type="PDB" id="2L8D">
    <property type="method" value="NMR"/>
    <property type="chains" value="A=1-62"/>
</dbReference>
<dbReference type="PDBsum" id="2L8D"/>
<dbReference type="BMRB" id="P23913"/>
<dbReference type="SMR" id="P23913"/>
<dbReference type="FunCoup" id="P23913">
    <property type="interactions" value="809"/>
</dbReference>
<dbReference type="IntAct" id="P23913">
    <property type="interactions" value="1"/>
</dbReference>
<dbReference type="MINT" id="P23913"/>
<dbReference type="STRING" id="9031.ENSGALP00000015128"/>
<dbReference type="GlyGen" id="P23913">
    <property type="glycosylation" value="3 sites, 1 O-linked glycan (3 sites)"/>
</dbReference>
<dbReference type="iPTMnet" id="P23913"/>
<dbReference type="PaxDb" id="9031-ENSGALP00000015128"/>
<dbReference type="KEGG" id="gga:396285"/>
<dbReference type="VEuPathDB" id="HostDB:geneid_396285"/>
<dbReference type="eggNOG" id="KOG1435">
    <property type="taxonomic scope" value="Eukaryota"/>
</dbReference>
<dbReference type="InParanoid" id="P23913"/>
<dbReference type="OrthoDB" id="5326588at2759"/>
<dbReference type="PhylomeDB" id="P23913"/>
<dbReference type="UniPathway" id="UPA00063"/>
<dbReference type="EvolutionaryTrace" id="P23913"/>
<dbReference type="PRO" id="PR:P23913"/>
<dbReference type="Proteomes" id="UP000000539">
    <property type="component" value="Unassembled WGS sequence"/>
</dbReference>
<dbReference type="GO" id="GO:0005737">
    <property type="term" value="C:cytoplasm"/>
    <property type="evidence" value="ECO:0000250"/>
    <property type="project" value="UniProtKB"/>
</dbReference>
<dbReference type="GO" id="GO:0005789">
    <property type="term" value="C:endoplasmic reticulum membrane"/>
    <property type="evidence" value="ECO:0000250"/>
    <property type="project" value="UniProtKB"/>
</dbReference>
<dbReference type="GO" id="GO:0005637">
    <property type="term" value="C:nuclear inner membrane"/>
    <property type="evidence" value="ECO:0000318"/>
    <property type="project" value="GO_Central"/>
</dbReference>
<dbReference type="GO" id="GO:0005634">
    <property type="term" value="C:nucleus"/>
    <property type="evidence" value="ECO:0000250"/>
    <property type="project" value="UniProtKB"/>
</dbReference>
<dbReference type="GO" id="GO:0050613">
    <property type="term" value="F:Delta14-sterol reductase activity"/>
    <property type="evidence" value="ECO:0000250"/>
    <property type="project" value="UniProtKB"/>
</dbReference>
<dbReference type="GO" id="GO:0003677">
    <property type="term" value="F:DNA binding"/>
    <property type="evidence" value="ECO:0007669"/>
    <property type="project" value="UniProtKB-KW"/>
</dbReference>
<dbReference type="GO" id="GO:0070402">
    <property type="term" value="F:NADPH binding"/>
    <property type="evidence" value="ECO:0000250"/>
    <property type="project" value="UniProtKB"/>
</dbReference>
<dbReference type="GO" id="GO:0006695">
    <property type="term" value="P:cholesterol biosynthetic process"/>
    <property type="evidence" value="ECO:0000250"/>
    <property type="project" value="UniProtKB"/>
</dbReference>
<dbReference type="GO" id="GO:0030223">
    <property type="term" value="P:neutrophil differentiation"/>
    <property type="evidence" value="ECO:0000250"/>
    <property type="project" value="UniProtKB"/>
</dbReference>
<dbReference type="CDD" id="cd20381">
    <property type="entry name" value="Tudor_LBR"/>
    <property type="match status" value="1"/>
</dbReference>
<dbReference type="FunFam" id="1.20.120.1630:FF:000001">
    <property type="entry name" value="delta(14)-sterol reductase isoform X1"/>
    <property type="match status" value="1"/>
</dbReference>
<dbReference type="FunFam" id="2.30.30.140:FF:000058">
    <property type="entry name" value="Lamin B receptor"/>
    <property type="match status" value="1"/>
</dbReference>
<dbReference type="Gene3D" id="1.20.120.1630">
    <property type="match status" value="1"/>
</dbReference>
<dbReference type="Gene3D" id="2.30.30.140">
    <property type="match status" value="1"/>
</dbReference>
<dbReference type="InterPro" id="IPR001171">
    <property type="entry name" value="ERG24_DHCR-like"/>
</dbReference>
<dbReference type="InterPro" id="IPR019023">
    <property type="entry name" value="Lamin-B_rcpt_of_tudor"/>
</dbReference>
<dbReference type="InterPro" id="IPR018083">
    <property type="entry name" value="Sterol_reductase_CS"/>
</dbReference>
<dbReference type="InterPro" id="IPR002999">
    <property type="entry name" value="Tudor"/>
</dbReference>
<dbReference type="PANTHER" id="PTHR21257">
    <property type="entry name" value="DELTA(14)-STEROL REDUCTASE"/>
    <property type="match status" value="1"/>
</dbReference>
<dbReference type="PANTHER" id="PTHR21257:SF55">
    <property type="entry name" value="DELTA(14)-STEROL REDUCTASE LBR"/>
    <property type="match status" value="1"/>
</dbReference>
<dbReference type="Pfam" id="PF01222">
    <property type="entry name" value="ERG4_ERG24"/>
    <property type="match status" value="1"/>
</dbReference>
<dbReference type="Pfam" id="PF09465">
    <property type="entry name" value="LBR_tudor"/>
    <property type="match status" value="1"/>
</dbReference>
<dbReference type="SMART" id="SM00333">
    <property type="entry name" value="TUDOR"/>
    <property type="match status" value="1"/>
</dbReference>
<dbReference type="SUPFAM" id="SSF63748">
    <property type="entry name" value="Tudor/PWWP/MBT"/>
    <property type="match status" value="1"/>
</dbReference>
<dbReference type="PROSITE" id="PS01017">
    <property type="entry name" value="STEROL_REDUCT_1"/>
    <property type="match status" value="1"/>
</dbReference>
<dbReference type="PROSITE" id="PS01018">
    <property type="entry name" value="STEROL_REDUCT_2"/>
    <property type="match status" value="1"/>
</dbReference>
<keyword id="KW-0002">3D-structure</keyword>
<keyword id="KW-0152">Cholesterol biosynthesis</keyword>
<keyword id="KW-0153">Cholesterol metabolism</keyword>
<keyword id="KW-0963">Cytoplasm</keyword>
<keyword id="KW-0238">DNA-binding</keyword>
<keyword id="KW-0256">Endoplasmic reticulum</keyword>
<keyword id="KW-0444">Lipid biosynthesis</keyword>
<keyword id="KW-0443">Lipid metabolism</keyword>
<keyword id="KW-0472">Membrane</keyword>
<keyword id="KW-0539">Nucleus</keyword>
<keyword id="KW-0560">Oxidoreductase</keyword>
<keyword id="KW-0597">Phosphoprotein</keyword>
<keyword id="KW-0675">Receptor</keyword>
<keyword id="KW-1185">Reference proteome</keyword>
<keyword id="KW-0752">Steroid biosynthesis</keyword>
<keyword id="KW-0753">Steroid metabolism</keyword>
<keyword id="KW-0756">Sterol biosynthesis</keyword>
<keyword id="KW-1207">Sterol metabolism</keyword>
<keyword id="KW-0812">Transmembrane</keyword>
<keyword id="KW-1133">Transmembrane helix</keyword>
<proteinExistence type="evidence at protein level"/>